<protein>
    <recommendedName>
        <fullName>Zinc finger CCCH domain-containing protein 44</fullName>
        <shortName>OsC3H44</shortName>
    </recommendedName>
</protein>
<proteinExistence type="evidence at transcript level"/>
<sequence length="295" mass="30452">MEAGGGKRAAPEGTNGAAKRARASESSQVGVGSKLKPCTKFFSTSGCPFGSSCHFLHNFPGGYQAAAKMTSHGGTAVAAPPGRMPLGPGAPNGPPTSSVKTRMCNKYNTAEGCKWGSKCHFAHGERELGKPMLLDNSMPHPMGSMPFEAPPMPGPDIVPPSTFGASATAKISVDASLAGGIIGKGGTNTKHISRMTGAKLAIRDNESNPNLKNIELEGTFDQIKHASAMVTELIVRISGNAPPAKNPGRGSHAGGPGSNFKTKLCENFNKGSCTFGDRCHFAHGESELRKPPAAA</sequence>
<reference key="1">
    <citation type="journal article" date="2005" name="Nature">
        <title>The map-based sequence of the rice genome.</title>
        <authorList>
            <consortium name="International rice genome sequencing project (IRGSP)"/>
        </authorList>
    </citation>
    <scope>NUCLEOTIDE SEQUENCE [LARGE SCALE GENOMIC DNA]</scope>
    <source>
        <strain>cv. Nipponbare</strain>
    </source>
</reference>
<reference key="2">
    <citation type="journal article" date="2008" name="Nucleic Acids Res.">
        <title>The rice annotation project database (RAP-DB): 2008 update.</title>
        <authorList>
            <consortium name="The rice annotation project (RAP)"/>
        </authorList>
    </citation>
    <scope>GENOME REANNOTATION</scope>
    <source>
        <strain>cv. Nipponbare</strain>
    </source>
</reference>
<reference key="3">
    <citation type="journal article" date="2013" name="Rice">
        <title>Improvement of the Oryza sativa Nipponbare reference genome using next generation sequence and optical map data.</title>
        <authorList>
            <person name="Kawahara Y."/>
            <person name="de la Bastide M."/>
            <person name="Hamilton J.P."/>
            <person name="Kanamori H."/>
            <person name="McCombie W.R."/>
            <person name="Ouyang S."/>
            <person name="Schwartz D.C."/>
            <person name="Tanaka T."/>
            <person name="Wu J."/>
            <person name="Zhou S."/>
            <person name="Childs K.L."/>
            <person name="Davidson R.M."/>
            <person name="Lin H."/>
            <person name="Quesada-Ocampo L."/>
            <person name="Vaillancourt B."/>
            <person name="Sakai H."/>
            <person name="Lee S.S."/>
            <person name="Kim J."/>
            <person name="Numa H."/>
            <person name="Itoh T."/>
            <person name="Buell C.R."/>
            <person name="Matsumoto T."/>
        </authorList>
    </citation>
    <scope>GENOME REANNOTATION</scope>
    <source>
        <strain>cv. Nipponbare</strain>
    </source>
</reference>
<reference key="4">
    <citation type="journal article" date="2008" name="BMC Genomics">
        <title>Genome-wide analysis of CCCH zinc finger family in Arabidopsis and rice.</title>
        <authorList>
            <person name="Wang D."/>
            <person name="Guo Y."/>
            <person name="Wu C."/>
            <person name="Yang G."/>
            <person name="Li Y."/>
            <person name="Zheng C."/>
        </authorList>
    </citation>
    <scope>NOMENCLATURE</scope>
</reference>
<dbReference type="EMBL" id="AP003609">
    <property type="protein sequence ID" value="BAD35424.1"/>
    <property type="molecule type" value="Genomic_DNA"/>
</dbReference>
<dbReference type="EMBL" id="AP008212">
    <property type="protein sequence ID" value="BAF19997.1"/>
    <property type="status" value="ALT_SEQ"/>
    <property type="molecule type" value="Genomic_DNA"/>
</dbReference>
<dbReference type="EMBL" id="AP014962">
    <property type="status" value="NOT_ANNOTATED_CDS"/>
    <property type="molecule type" value="Genomic_DNA"/>
</dbReference>
<dbReference type="RefSeq" id="XP_015641069.1">
    <property type="nucleotide sequence ID" value="XM_015785583.1"/>
</dbReference>
<dbReference type="SMR" id="Q69XQ3"/>
<dbReference type="FunCoup" id="Q69XQ3">
    <property type="interactions" value="1325"/>
</dbReference>
<dbReference type="STRING" id="39947.Q69XQ3"/>
<dbReference type="PaxDb" id="39947-Q69XQ3"/>
<dbReference type="KEGG" id="dosa:Os06g0618100"/>
<dbReference type="eggNOG" id="KOG1677">
    <property type="taxonomic scope" value="Eukaryota"/>
</dbReference>
<dbReference type="HOGENOM" id="CLU_045191_0_0_1"/>
<dbReference type="InParanoid" id="Q69XQ3"/>
<dbReference type="OrthoDB" id="410307at2759"/>
<dbReference type="Proteomes" id="UP000000763">
    <property type="component" value="Chromosome 6"/>
</dbReference>
<dbReference type="Proteomes" id="UP000059680">
    <property type="component" value="Chromosome 6"/>
</dbReference>
<dbReference type="GO" id="GO:0005737">
    <property type="term" value="C:cytoplasm"/>
    <property type="evidence" value="ECO:0000318"/>
    <property type="project" value="GO_Central"/>
</dbReference>
<dbReference type="GO" id="GO:0003677">
    <property type="term" value="F:DNA binding"/>
    <property type="evidence" value="ECO:0007669"/>
    <property type="project" value="UniProtKB-KW"/>
</dbReference>
<dbReference type="GO" id="GO:0003729">
    <property type="term" value="F:mRNA binding"/>
    <property type="evidence" value="ECO:0000318"/>
    <property type="project" value="GO_Central"/>
</dbReference>
<dbReference type="GO" id="GO:0008270">
    <property type="term" value="F:zinc ion binding"/>
    <property type="evidence" value="ECO:0007669"/>
    <property type="project" value="UniProtKB-KW"/>
</dbReference>
<dbReference type="GO" id="GO:0010468">
    <property type="term" value="P:regulation of gene expression"/>
    <property type="evidence" value="ECO:0000318"/>
    <property type="project" value="GO_Central"/>
</dbReference>
<dbReference type="CDD" id="cd22464">
    <property type="entry name" value="KH-I_AtC3H36_like"/>
    <property type="match status" value="1"/>
</dbReference>
<dbReference type="FunFam" id="4.10.1000.10:FF:000003">
    <property type="entry name" value="Zinc finger CCCH domain-containing protein"/>
    <property type="match status" value="2"/>
</dbReference>
<dbReference type="FunFam" id="3.30.1370.10:FF:000069">
    <property type="entry name" value="Zinc finger CCCH domain-containing protein 52"/>
    <property type="match status" value="1"/>
</dbReference>
<dbReference type="Gene3D" id="3.30.1370.10">
    <property type="entry name" value="K Homology domain, type 1"/>
    <property type="match status" value="1"/>
</dbReference>
<dbReference type="Gene3D" id="4.10.1000.10">
    <property type="entry name" value="Zinc finger, CCCH-type"/>
    <property type="match status" value="2"/>
</dbReference>
<dbReference type="InterPro" id="IPR004087">
    <property type="entry name" value="KH_dom"/>
</dbReference>
<dbReference type="InterPro" id="IPR004088">
    <property type="entry name" value="KH_dom_type_1"/>
</dbReference>
<dbReference type="InterPro" id="IPR036612">
    <property type="entry name" value="KH_dom_type_1_sf"/>
</dbReference>
<dbReference type="InterPro" id="IPR045877">
    <property type="entry name" value="ZFP36-like"/>
</dbReference>
<dbReference type="InterPro" id="IPR000571">
    <property type="entry name" value="Znf_CCCH"/>
</dbReference>
<dbReference type="InterPro" id="IPR036855">
    <property type="entry name" value="Znf_CCCH_sf"/>
</dbReference>
<dbReference type="PANTHER" id="PTHR12547">
    <property type="entry name" value="CCCH ZINC FINGER/TIS11-RELATED"/>
    <property type="match status" value="1"/>
</dbReference>
<dbReference type="PANTHER" id="PTHR12547:SF154">
    <property type="entry name" value="ZINC FINGER CCCH DOMAIN-CONTAINING PROTEIN 52"/>
    <property type="match status" value="1"/>
</dbReference>
<dbReference type="Pfam" id="PF00013">
    <property type="entry name" value="KH_1"/>
    <property type="match status" value="1"/>
</dbReference>
<dbReference type="Pfam" id="PF00642">
    <property type="entry name" value="zf-CCCH"/>
    <property type="match status" value="2"/>
</dbReference>
<dbReference type="SMART" id="SM00322">
    <property type="entry name" value="KH"/>
    <property type="match status" value="1"/>
</dbReference>
<dbReference type="SMART" id="SM00356">
    <property type="entry name" value="ZnF_C3H1"/>
    <property type="match status" value="3"/>
</dbReference>
<dbReference type="SUPFAM" id="SSF90229">
    <property type="entry name" value="CCCH zinc finger"/>
    <property type="match status" value="3"/>
</dbReference>
<dbReference type="SUPFAM" id="SSF54791">
    <property type="entry name" value="Eukaryotic type KH-domain (KH-domain type I)"/>
    <property type="match status" value="1"/>
</dbReference>
<dbReference type="PROSITE" id="PS50084">
    <property type="entry name" value="KH_TYPE_1"/>
    <property type="match status" value="1"/>
</dbReference>
<dbReference type="PROSITE" id="PS50103">
    <property type="entry name" value="ZF_C3H1"/>
    <property type="match status" value="3"/>
</dbReference>
<organism>
    <name type="scientific">Oryza sativa subsp. japonica</name>
    <name type="common">Rice</name>
    <dbReference type="NCBI Taxonomy" id="39947"/>
    <lineage>
        <taxon>Eukaryota</taxon>
        <taxon>Viridiplantae</taxon>
        <taxon>Streptophyta</taxon>
        <taxon>Embryophyta</taxon>
        <taxon>Tracheophyta</taxon>
        <taxon>Spermatophyta</taxon>
        <taxon>Magnoliopsida</taxon>
        <taxon>Liliopsida</taxon>
        <taxon>Poales</taxon>
        <taxon>Poaceae</taxon>
        <taxon>BOP clade</taxon>
        <taxon>Oryzoideae</taxon>
        <taxon>Oryzeae</taxon>
        <taxon>Oryzinae</taxon>
        <taxon>Oryza</taxon>
        <taxon>Oryza sativa</taxon>
    </lineage>
</organism>
<keyword id="KW-0238">DNA-binding</keyword>
<keyword id="KW-0479">Metal-binding</keyword>
<keyword id="KW-1185">Reference proteome</keyword>
<keyword id="KW-0677">Repeat</keyword>
<keyword id="KW-0694">RNA-binding</keyword>
<keyword id="KW-0862">Zinc</keyword>
<keyword id="KW-0863">Zinc-finger</keyword>
<gene>
    <name type="ordered locus">Os06g0618100</name>
    <name type="ordered locus">LOC_Os06g41384</name>
    <name type="ORF">P0012B02.7-1</name>
</gene>
<comment type="sequence caution" evidence="4">
    <conflict type="erroneous gene model prediction">
        <sequence resource="EMBL-CDS" id="BAF19997"/>
    </conflict>
</comment>
<name>C3H44_ORYSJ</name>
<feature type="chain" id="PRO_0000346838" description="Zinc finger CCCH domain-containing protein 44">
    <location>
        <begin position="1"/>
        <end position="295"/>
    </location>
</feature>
<feature type="domain" description="KH" evidence="1">
    <location>
        <begin position="166"/>
        <end position="230"/>
    </location>
</feature>
<feature type="zinc finger region" description="C3H1-type 1" evidence="2">
    <location>
        <begin position="32"/>
        <end position="60"/>
    </location>
</feature>
<feature type="zinc finger region" description="C3H1-type 2" evidence="2">
    <location>
        <begin position="98"/>
        <end position="126"/>
    </location>
</feature>
<feature type="zinc finger region" description="C3H1-type 3" evidence="2">
    <location>
        <begin position="259"/>
        <end position="286"/>
    </location>
</feature>
<feature type="region of interest" description="Disordered" evidence="3">
    <location>
        <begin position="1"/>
        <end position="31"/>
    </location>
</feature>
<accession>Q69XQ3</accession>
<accession>Q0DAX6</accession>
<evidence type="ECO:0000255" key="1">
    <source>
        <dbReference type="PROSITE-ProRule" id="PRU00117"/>
    </source>
</evidence>
<evidence type="ECO:0000255" key="2">
    <source>
        <dbReference type="PROSITE-ProRule" id="PRU00723"/>
    </source>
</evidence>
<evidence type="ECO:0000256" key="3">
    <source>
        <dbReference type="SAM" id="MobiDB-lite"/>
    </source>
</evidence>
<evidence type="ECO:0000305" key="4"/>